<reference key="1">
    <citation type="journal article" date="1999" name="Nature">
        <title>Sequence and analysis of chromosome 2 of the plant Arabidopsis thaliana.</title>
        <authorList>
            <person name="Lin X."/>
            <person name="Kaul S."/>
            <person name="Rounsley S.D."/>
            <person name="Shea T.P."/>
            <person name="Benito M.-I."/>
            <person name="Town C.D."/>
            <person name="Fujii C.Y."/>
            <person name="Mason T.M."/>
            <person name="Bowman C.L."/>
            <person name="Barnstead M.E."/>
            <person name="Feldblyum T.V."/>
            <person name="Buell C.R."/>
            <person name="Ketchum K.A."/>
            <person name="Lee J.J."/>
            <person name="Ronning C.M."/>
            <person name="Koo H.L."/>
            <person name="Moffat K.S."/>
            <person name="Cronin L.A."/>
            <person name="Shen M."/>
            <person name="Pai G."/>
            <person name="Van Aken S."/>
            <person name="Umayam L."/>
            <person name="Tallon L.J."/>
            <person name="Gill J.E."/>
            <person name="Adams M.D."/>
            <person name="Carrera A.J."/>
            <person name="Creasy T.H."/>
            <person name="Goodman H.M."/>
            <person name="Somerville C.R."/>
            <person name="Copenhaver G.P."/>
            <person name="Preuss D."/>
            <person name="Nierman W.C."/>
            <person name="White O."/>
            <person name="Eisen J.A."/>
            <person name="Salzberg S.L."/>
            <person name="Fraser C.M."/>
            <person name="Venter J.C."/>
        </authorList>
    </citation>
    <scope>NUCLEOTIDE SEQUENCE [LARGE SCALE GENOMIC DNA]</scope>
    <source>
        <strain>cv. Columbia</strain>
    </source>
</reference>
<reference key="2">
    <citation type="journal article" date="2017" name="Plant J.">
        <title>Araport11: a complete reannotation of the Arabidopsis thaliana reference genome.</title>
        <authorList>
            <person name="Cheng C.Y."/>
            <person name="Krishnakumar V."/>
            <person name="Chan A.P."/>
            <person name="Thibaud-Nissen F."/>
            <person name="Schobel S."/>
            <person name="Town C.D."/>
        </authorList>
    </citation>
    <scope>GENOME REANNOTATION</scope>
    <source>
        <strain>cv. Columbia</strain>
    </source>
</reference>
<reference key="3">
    <citation type="journal article" date="2004" name="Plant Cell">
        <title>Genome-wide analysis of Arabidopsis pentatricopeptide repeat proteins reveals their essential role in organelle biogenesis.</title>
        <authorList>
            <person name="Lurin C."/>
            <person name="Andres C."/>
            <person name="Aubourg S."/>
            <person name="Bellaoui M."/>
            <person name="Bitton F."/>
            <person name="Bruyere C."/>
            <person name="Caboche M."/>
            <person name="Debast C."/>
            <person name="Gualberto J."/>
            <person name="Hoffmann B."/>
            <person name="Lecharny A."/>
            <person name="Le Ret M."/>
            <person name="Martin-Magniette M.-L."/>
            <person name="Mireau H."/>
            <person name="Peeters N."/>
            <person name="Renou J.-P."/>
            <person name="Szurek B."/>
            <person name="Taconnat L."/>
            <person name="Small I."/>
        </authorList>
    </citation>
    <scope>GENE FAMILY</scope>
</reference>
<keyword id="KW-1185">Reference proteome</keyword>
<keyword id="KW-0677">Repeat</keyword>
<organism>
    <name type="scientific">Arabidopsis thaliana</name>
    <name type="common">Mouse-ear cress</name>
    <dbReference type="NCBI Taxonomy" id="3702"/>
    <lineage>
        <taxon>Eukaryota</taxon>
        <taxon>Viridiplantae</taxon>
        <taxon>Streptophyta</taxon>
        <taxon>Embryophyta</taxon>
        <taxon>Tracheophyta</taxon>
        <taxon>Spermatophyta</taxon>
        <taxon>Magnoliopsida</taxon>
        <taxon>eudicotyledons</taxon>
        <taxon>Gunneridae</taxon>
        <taxon>Pentapetalae</taxon>
        <taxon>rosids</taxon>
        <taxon>malvids</taxon>
        <taxon>Brassicales</taxon>
        <taxon>Brassicaceae</taxon>
        <taxon>Camelineae</taxon>
        <taxon>Arabidopsis</taxon>
    </lineage>
</organism>
<proteinExistence type="inferred from homology"/>
<protein>
    <recommendedName>
        <fullName>Putative pentatricopeptide repeat-containing protein At2g02150</fullName>
    </recommendedName>
</protein>
<feature type="chain" id="PRO_0000356003" description="Putative pentatricopeptide repeat-containing protein At2g02150">
    <location>
        <begin position="1"/>
        <end position="761"/>
    </location>
</feature>
<feature type="repeat" description="PPR 1">
    <location>
        <begin position="141"/>
        <end position="175"/>
    </location>
</feature>
<feature type="repeat" description="PPR 2">
    <location>
        <begin position="191"/>
        <end position="225"/>
    </location>
</feature>
<feature type="repeat" description="PPR 3">
    <location>
        <begin position="226"/>
        <end position="260"/>
    </location>
</feature>
<feature type="repeat" description="PPR 4">
    <location>
        <begin position="261"/>
        <end position="295"/>
    </location>
</feature>
<feature type="repeat" description="PPR 5">
    <location>
        <begin position="296"/>
        <end position="330"/>
    </location>
</feature>
<feature type="repeat" description="PPR 6">
    <location>
        <begin position="331"/>
        <end position="365"/>
    </location>
</feature>
<feature type="repeat" description="PPR 7">
    <location>
        <begin position="366"/>
        <end position="400"/>
    </location>
</feature>
<feature type="repeat" description="PPR 8">
    <location>
        <begin position="401"/>
        <end position="435"/>
    </location>
</feature>
<feature type="repeat" description="PPR 9">
    <location>
        <begin position="436"/>
        <end position="470"/>
    </location>
</feature>
<feature type="repeat" description="PPR 10">
    <location>
        <begin position="471"/>
        <end position="505"/>
    </location>
</feature>
<feature type="repeat" description="PPR 11">
    <location>
        <begin position="506"/>
        <end position="540"/>
    </location>
</feature>
<feature type="repeat" description="PPR 12">
    <location>
        <begin position="541"/>
        <end position="575"/>
    </location>
</feature>
<feature type="repeat" description="PPR 13">
    <location>
        <begin position="576"/>
        <end position="606"/>
    </location>
</feature>
<feature type="repeat" description="PPR 14">
    <location>
        <begin position="612"/>
        <end position="646"/>
    </location>
</feature>
<feature type="repeat" description="PPR 15">
    <location>
        <begin position="647"/>
        <end position="681"/>
    </location>
</feature>
<feature type="repeat" description="PPR 16">
    <location>
        <begin position="682"/>
        <end position="716"/>
    </location>
</feature>
<feature type="repeat" description="PPR 17">
    <location>
        <begin position="717"/>
        <end position="751"/>
    </location>
</feature>
<name>PP143_ARATH</name>
<dbReference type="EMBL" id="AC005936">
    <property type="protein sequence ID" value="AAC97219.1"/>
    <property type="status" value="ALT_SEQ"/>
    <property type="molecule type" value="Genomic_DNA"/>
</dbReference>
<dbReference type="EMBL" id="CP002685">
    <property type="protein sequence ID" value="AEC05553.1"/>
    <property type="molecule type" value="Genomic_DNA"/>
</dbReference>
<dbReference type="EMBL" id="CP002685">
    <property type="protein sequence ID" value="ANM62913.1"/>
    <property type="molecule type" value="Genomic_DNA"/>
</dbReference>
<dbReference type="PIR" id="E84433">
    <property type="entry name" value="E84433"/>
</dbReference>
<dbReference type="RefSeq" id="NP_001318179.1">
    <property type="nucleotide sequence ID" value="NM_001335100.1"/>
</dbReference>
<dbReference type="RefSeq" id="NP_178323.3">
    <property type="nucleotide sequence ID" value="NM_126275.4"/>
</dbReference>
<dbReference type="SMR" id="P0C894"/>
<dbReference type="FunCoup" id="P0C894">
    <property type="interactions" value="30"/>
</dbReference>
<dbReference type="STRING" id="3702.P0C894"/>
<dbReference type="PaxDb" id="3702-AT2G02150.1"/>
<dbReference type="ProteomicsDB" id="249071"/>
<dbReference type="EnsemblPlants" id="AT2G02150.1">
    <property type="protein sequence ID" value="AT2G02150.1"/>
    <property type="gene ID" value="AT2G02150"/>
</dbReference>
<dbReference type="EnsemblPlants" id="AT2G02150.2">
    <property type="protein sequence ID" value="AT2G02150.2"/>
    <property type="gene ID" value="AT2G02150"/>
</dbReference>
<dbReference type="GeneID" id="814746"/>
<dbReference type="Gramene" id="AT2G02150.1">
    <property type="protein sequence ID" value="AT2G02150.1"/>
    <property type="gene ID" value="AT2G02150"/>
</dbReference>
<dbReference type="Gramene" id="AT2G02150.2">
    <property type="protein sequence ID" value="AT2G02150.2"/>
    <property type="gene ID" value="AT2G02150"/>
</dbReference>
<dbReference type="KEGG" id="ath:AT2G02150"/>
<dbReference type="Araport" id="AT2G02150"/>
<dbReference type="TAIR" id="AT2G02150">
    <property type="gene designation" value="EMB2794"/>
</dbReference>
<dbReference type="eggNOG" id="KOG4197">
    <property type="taxonomic scope" value="Eukaryota"/>
</dbReference>
<dbReference type="HOGENOM" id="CLU_002706_49_12_1"/>
<dbReference type="InParanoid" id="P0C894"/>
<dbReference type="OMA" id="SECFLRM"/>
<dbReference type="PhylomeDB" id="P0C894"/>
<dbReference type="PRO" id="PR:P0C894"/>
<dbReference type="Proteomes" id="UP000006548">
    <property type="component" value="Chromosome 2"/>
</dbReference>
<dbReference type="ExpressionAtlas" id="P0C894">
    <property type="expression patterns" value="baseline and differential"/>
</dbReference>
<dbReference type="GO" id="GO:0005739">
    <property type="term" value="C:mitochondrion"/>
    <property type="evidence" value="ECO:0000314"/>
    <property type="project" value="TAIR"/>
</dbReference>
<dbReference type="GO" id="GO:0036002">
    <property type="term" value="F:pre-mRNA binding"/>
    <property type="evidence" value="ECO:0000353"/>
    <property type="project" value="TAIR"/>
</dbReference>
<dbReference type="GO" id="GO:0090615">
    <property type="term" value="P:mitochondrial mRNA processing"/>
    <property type="evidence" value="ECO:0000315"/>
    <property type="project" value="TAIR"/>
</dbReference>
<dbReference type="Gene3D" id="1.25.40.10">
    <property type="entry name" value="Tetratricopeptide repeat domain"/>
    <property type="match status" value="7"/>
</dbReference>
<dbReference type="InterPro" id="IPR002885">
    <property type="entry name" value="Pentatricopeptide_rpt"/>
</dbReference>
<dbReference type="InterPro" id="IPR050667">
    <property type="entry name" value="PPR-containing_protein"/>
</dbReference>
<dbReference type="InterPro" id="IPR011990">
    <property type="entry name" value="TPR-like_helical_dom_sf"/>
</dbReference>
<dbReference type="NCBIfam" id="TIGR00756">
    <property type="entry name" value="PPR"/>
    <property type="match status" value="12"/>
</dbReference>
<dbReference type="PANTHER" id="PTHR47939">
    <property type="entry name" value="MEMBRANE-ASSOCIATED SALT-INDUCIBLE PROTEIN-LIKE"/>
    <property type="match status" value="1"/>
</dbReference>
<dbReference type="PANTHER" id="PTHR47939:SF13">
    <property type="entry name" value="OS03G0201400 PROTEIN"/>
    <property type="match status" value="1"/>
</dbReference>
<dbReference type="Pfam" id="PF01535">
    <property type="entry name" value="PPR"/>
    <property type="match status" value="4"/>
</dbReference>
<dbReference type="Pfam" id="PF12854">
    <property type="entry name" value="PPR_1"/>
    <property type="match status" value="2"/>
</dbReference>
<dbReference type="Pfam" id="PF13041">
    <property type="entry name" value="PPR_2"/>
    <property type="match status" value="5"/>
</dbReference>
<dbReference type="SUPFAM" id="SSF81901">
    <property type="entry name" value="HCP-like"/>
    <property type="match status" value="1"/>
</dbReference>
<dbReference type="PROSITE" id="PS51375">
    <property type="entry name" value="PPR"/>
    <property type="match status" value="17"/>
</dbReference>
<evidence type="ECO:0000305" key="1"/>
<accession>P0C894</accession>
<accession>Q9ZUL9</accession>
<gene>
    <name type="ordered locus">At2g02150</name>
    <name type="ORF">F5O4.8</name>
</gene>
<comment type="similarity">
    <text evidence="1">Belongs to the PPR family. P subfamily.</text>
</comment>
<comment type="sequence caution" evidence="1">
    <conflict type="erroneous gene model prediction">
        <sequence resource="EMBL-CDS" id="AAC97219"/>
    </conflict>
    <text>The predicted gene has been split into 2 genes: At2g02148 and At2g02150.</text>
</comment>
<comment type="online information" name="Pentatricopeptide repeat proteins">
    <link uri="https://ppr.plantenergy.uwa.edu.au"/>
</comment>
<sequence length="761" mass="86085">MFCSLRNFLHVNRRFPRHVSPSSSSLSQIQSPLCFPLSSPSPSQSSFISCPFVWFTSFLCIIRYPFVTKSGTSTYSEDFDRDWIRKVVHNDLWDDPGLEKLFDLTLAPIWVPRVLVELKEDPKLAFKFFKWSMTRNGFKHSVESYCIVAHILFCARMYYDANSVLKEMVLSKADCDVFDVLWSTRNVCVPGFGVFDALFSVLIDLGMLEEAIQCFSKMKRFRVFPKTRSCNGLLHRFAKLGKTDDVKRFFKDMIGAGARPTVFTYNIMIDCMCKEGDVEAARGLFEEMKFRGLVPDTVTYNSMIDGFGKVGRLDDTVCFFEEMKDMCCEPDVITYNALINCFCKFGKLPIGLEFYREMKGNGLKPNVVSYSTLVDAFCKEGMMQQAIKFYVDMRRVGLVPNEYTYTSLIDANCKIGNLSDAFRLGNEMLQVGVEWNVVTYTALIDGLCDAERMKEAEELFGKMDTAGVIPNLASYNALIHGFVKAKNMDRALELLNELKGRGIKPDLLLYGTFIWGLCSLEKIEAAKVVMNEMKECGIKANSLIYTTLMDAYFKSGNPTEGLHLLDEMKELDIEVTVVTFCVLIDGLCKNKLVSKAVDYFNRISNDFGLQANAAIFTAMIDGLCKDNQVEAATTLFEQMVQKGLVPDRTAYTSLMDGNFKQGNVLEALALRDKMAEIGMKLDLLAYTSLVWGLSHCNQLQKARSFLEEMIGEGIHPDEVLCISVLKKHYELGCIDEAVELQSYLMKHQLLTSDNDNALPNM</sequence>